<gene>
    <name evidence="1" type="primary">sucD</name>
    <name type="ordered locus">RBE_1227</name>
</gene>
<protein>
    <recommendedName>
        <fullName evidence="1">Succinate--CoA ligase [ADP-forming] subunit alpha</fullName>
        <ecNumber evidence="1">6.2.1.5</ecNumber>
    </recommendedName>
    <alternativeName>
        <fullName evidence="1">Succinyl-CoA synthetase subunit alpha</fullName>
        <shortName evidence="1">SCS-alpha</shortName>
    </alternativeName>
</protein>
<name>SUCD_RICBR</name>
<feature type="chain" id="PRO_0000286487" description="Succinate--CoA ligase [ADP-forming] subunit alpha">
    <location>
        <begin position="1"/>
        <end position="291"/>
    </location>
</feature>
<feature type="active site" description="Tele-phosphohistidine intermediate" evidence="1">
    <location>
        <position position="248"/>
    </location>
</feature>
<feature type="binding site" evidence="1">
    <location>
        <begin position="17"/>
        <end position="20"/>
    </location>
    <ligand>
        <name>CoA</name>
        <dbReference type="ChEBI" id="CHEBI:57287"/>
    </ligand>
</feature>
<feature type="binding site" evidence="1">
    <location>
        <position position="43"/>
    </location>
    <ligand>
        <name>CoA</name>
        <dbReference type="ChEBI" id="CHEBI:57287"/>
    </ligand>
</feature>
<feature type="binding site" evidence="1">
    <location>
        <begin position="96"/>
        <end position="98"/>
    </location>
    <ligand>
        <name>CoA</name>
        <dbReference type="ChEBI" id="CHEBI:57287"/>
    </ligand>
</feature>
<feature type="binding site" evidence="1">
    <location>
        <position position="159"/>
    </location>
    <ligand>
        <name>substrate</name>
        <note>ligand shared with subunit beta</note>
    </ligand>
</feature>
<keyword id="KW-0436">Ligase</keyword>
<keyword id="KW-0547">Nucleotide-binding</keyword>
<keyword id="KW-0816">Tricarboxylic acid cycle</keyword>
<comment type="function">
    <text evidence="1">Succinyl-CoA synthetase functions in the citric acid cycle (TCA), coupling the hydrolysis of succinyl-CoA to the synthesis of either ATP or GTP and thus represents the only step of substrate-level phosphorylation in the TCA. The alpha subunit of the enzyme binds the substrates coenzyme A and phosphate, while succinate binding and nucleotide specificity is provided by the beta subunit.</text>
</comment>
<comment type="catalytic activity">
    <reaction evidence="1">
        <text>succinate + ATP + CoA = succinyl-CoA + ADP + phosphate</text>
        <dbReference type="Rhea" id="RHEA:17661"/>
        <dbReference type="ChEBI" id="CHEBI:30031"/>
        <dbReference type="ChEBI" id="CHEBI:30616"/>
        <dbReference type="ChEBI" id="CHEBI:43474"/>
        <dbReference type="ChEBI" id="CHEBI:57287"/>
        <dbReference type="ChEBI" id="CHEBI:57292"/>
        <dbReference type="ChEBI" id="CHEBI:456216"/>
        <dbReference type="EC" id="6.2.1.5"/>
    </reaction>
    <physiologicalReaction direction="right-to-left" evidence="1">
        <dbReference type="Rhea" id="RHEA:17663"/>
    </physiologicalReaction>
</comment>
<comment type="catalytic activity">
    <reaction evidence="1">
        <text>GTP + succinate + CoA = succinyl-CoA + GDP + phosphate</text>
        <dbReference type="Rhea" id="RHEA:22120"/>
        <dbReference type="ChEBI" id="CHEBI:30031"/>
        <dbReference type="ChEBI" id="CHEBI:37565"/>
        <dbReference type="ChEBI" id="CHEBI:43474"/>
        <dbReference type="ChEBI" id="CHEBI:57287"/>
        <dbReference type="ChEBI" id="CHEBI:57292"/>
        <dbReference type="ChEBI" id="CHEBI:58189"/>
    </reaction>
    <physiologicalReaction direction="right-to-left" evidence="1">
        <dbReference type="Rhea" id="RHEA:22122"/>
    </physiologicalReaction>
</comment>
<comment type="pathway">
    <text evidence="1">Carbohydrate metabolism; tricarboxylic acid cycle; succinate from succinyl-CoA (ligase route): step 1/1.</text>
</comment>
<comment type="subunit">
    <text evidence="1">Heterotetramer of two alpha and two beta subunits.</text>
</comment>
<comment type="similarity">
    <text evidence="1">Belongs to the succinate/malate CoA ligase alpha subunit family.</text>
</comment>
<dbReference type="EC" id="6.2.1.5" evidence="1"/>
<dbReference type="EMBL" id="CP000087">
    <property type="protein sequence ID" value="ABE05308.1"/>
    <property type="molecule type" value="Genomic_DNA"/>
</dbReference>
<dbReference type="RefSeq" id="WP_011477883.1">
    <property type="nucleotide sequence ID" value="NC_007940.1"/>
</dbReference>
<dbReference type="SMR" id="Q1RH56"/>
<dbReference type="KEGG" id="rbe:RBE_1227"/>
<dbReference type="eggNOG" id="COG0074">
    <property type="taxonomic scope" value="Bacteria"/>
</dbReference>
<dbReference type="HOGENOM" id="CLU_052104_0_0_5"/>
<dbReference type="OrthoDB" id="9807196at2"/>
<dbReference type="UniPathway" id="UPA00223">
    <property type="reaction ID" value="UER00999"/>
</dbReference>
<dbReference type="Proteomes" id="UP000001951">
    <property type="component" value="Chromosome"/>
</dbReference>
<dbReference type="GO" id="GO:0009361">
    <property type="term" value="C:succinate-CoA ligase complex (ADP-forming)"/>
    <property type="evidence" value="ECO:0007669"/>
    <property type="project" value="TreeGrafter"/>
</dbReference>
<dbReference type="GO" id="GO:0000166">
    <property type="term" value="F:nucleotide binding"/>
    <property type="evidence" value="ECO:0007669"/>
    <property type="project" value="UniProtKB-KW"/>
</dbReference>
<dbReference type="GO" id="GO:0004775">
    <property type="term" value="F:succinate-CoA ligase (ADP-forming) activity"/>
    <property type="evidence" value="ECO:0007669"/>
    <property type="project" value="UniProtKB-UniRule"/>
</dbReference>
<dbReference type="GO" id="GO:0004776">
    <property type="term" value="F:succinate-CoA ligase (GDP-forming) activity"/>
    <property type="evidence" value="ECO:0007669"/>
    <property type="project" value="TreeGrafter"/>
</dbReference>
<dbReference type="GO" id="GO:0006099">
    <property type="term" value="P:tricarboxylic acid cycle"/>
    <property type="evidence" value="ECO:0007669"/>
    <property type="project" value="UniProtKB-UniRule"/>
</dbReference>
<dbReference type="FunFam" id="3.40.50.720:FF:000002">
    <property type="entry name" value="Succinate--CoA ligase [ADP-forming] subunit alpha"/>
    <property type="match status" value="1"/>
</dbReference>
<dbReference type="FunFam" id="3.40.50.261:FF:000005">
    <property type="entry name" value="Succinate--CoA ligase [ADP-forming] subunit alpha, mitochondrial"/>
    <property type="match status" value="1"/>
</dbReference>
<dbReference type="Gene3D" id="3.40.50.720">
    <property type="entry name" value="NAD(P)-binding Rossmann-like Domain"/>
    <property type="match status" value="1"/>
</dbReference>
<dbReference type="Gene3D" id="3.40.50.261">
    <property type="entry name" value="Succinyl-CoA synthetase domains"/>
    <property type="match status" value="1"/>
</dbReference>
<dbReference type="HAMAP" id="MF_01988">
    <property type="entry name" value="Succ_CoA_alpha"/>
    <property type="match status" value="1"/>
</dbReference>
<dbReference type="InterPro" id="IPR017440">
    <property type="entry name" value="Cit_synth/succinyl-CoA_lig_AS"/>
</dbReference>
<dbReference type="InterPro" id="IPR033847">
    <property type="entry name" value="Citrt_syn/SCS-alpha_CS"/>
</dbReference>
<dbReference type="InterPro" id="IPR003781">
    <property type="entry name" value="CoA-bd"/>
</dbReference>
<dbReference type="InterPro" id="IPR005810">
    <property type="entry name" value="CoA_lig_alpha"/>
</dbReference>
<dbReference type="InterPro" id="IPR036291">
    <property type="entry name" value="NAD(P)-bd_dom_sf"/>
</dbReference>
<dbReference type="InterPro" id="IPR005811">
    <property type="entry name" value="SUCC_ACL_C"/>
</dbReference>
<dbReference type="InterPro" id="IPR016102">
    <property type="entry name" value="Succinyl-CoA_synth-like"/>
</dbReference>
<dbReference type="NCBIfam" id="NF004230">
    <property type="entry name" value="PRK05678.1"/>
    <property type="match status" value="1"/>
</dbReference>
<dbReference type="NCBIfam" id="TIGR01019">
    <property type="entry name" value="sucCoAalpha"/>
    <property type="match status" value="1"/>
</dbReference>
<dbReference type="PANTHER" id="PTHR11117:SF2">
    <property type="entry name" value="SUCCINATE--COA LIGASE [ADP_GDP-FORMING] SUBUNIT ALPHA, MITOCHONDRIAL"/>
    <property type="match status" value="1"/>
</dbReference>
<dbReference type="PANTHER" id="PTHR11117">
    <property type="entry name" value="SUCCINYL-COA LIGASE SUBUNIT ALPHA"/>
    <property type="match status" value="1"/>
</dbReference>
<dbReference type="Pfam" id="PF02629">
    <property type="entry name" value="CoA_binding"/>
    <property type="match status" value="1"/>
</dbReference>
<dbReference type="Pfam" id="PF00549">
    <property type="entry name" value="Ligase_CoA"/>
    <property type="match status" value="1"/>
</dbReference>
<dbReference type="PIRSF" id="PIRSF001553">
    <property type="entry name" value="SucCS_alpha"/>
    <property type="match status" value="1"/>
</dbReference>
<dbReference type="PRINTS" id="PR01798">
    <property type="entry name" value="SCOASYNTHASE"/>
</dbReference>
<dbReference type="SMART" id="SM00881">
    <property type="entry name" value="CoA_binding"/>
    <property type="match status" value="1"/>
</dbReference>
<dbReference type="SUPFAM" id="SSF51735">
    <property type="entry name" value="NAD(P)-binding Rossmann-fold domains"/>
    <property type="match status" value="1"/>
</dbReference>
<dbReference type="SUPFAM" id="SSF52210">
    <property type="entry name" value="Succinyl-CoA synthetase domains"/>
    <property type="match status" value="1"/>
</dbReference>
<dbReference type="PROSITE" id="PS01216">
    <property type="entry name" value="SUCCINYL_COA_LIG_1"/>
    <property type="match status" value="1"/>
</dbReference>
<dbReference type="PROSITE" id="PS00399">
    <property type="entry name" value="SUCCINYL_COA_LIG_2"/>
    <property type="match status" value="1"/>
</dbReference>
<proteinExistence type="inferred from homology"/>
<evidence type="ECO:0000255" key="1">
    <source>
        <dbReference type="HAMAP-Rule" id="MF_01988"/>
    </source>
</evidence>
<organism>
    <name type="scientific">Rickettsia bellii (strain RML369-C)</name>
    <dbReference type="NCBI Taxonomy" id="336407"/>
    <lineage>
        <taxon>Bacteria</taxon>
        <taxon>Pseudomonadati</taxon>
        <taxon>Pseudomonadota</taxon>
        <taxon>Alphaproteobacteria</taxon>
        <taxon>Rickettsiales</taxon>
        <taxon>Rickettsiaceae</taxon>
        <taxon>Rickettsieae</taxon>
        <taxon>Rickettsia</taxon>
        <taxon>belli group</taxon>
    </lineage>
</organism>
<sequence>MAILVNKKTKVICQGFTGSQGTFHSEQAIAYGTKMVGGVTPGKGGKTHLDLPIYNTVHEAKAKTGANASVIYVPPPFAADSILEAIDAGIEIVVCITEGIPVLDMVRVKRALVGSRTRLIGPNCPGIITPDECKIGIMPGHIHRKGSIGIVSRSGTLTYEAVAQTTAVGLGQSTCVGIGGDPVNGTNFVDCIDMFLQDDETKAIIMIGEIGGDAEENAADFIKHSKIKKPIVSFIAGITAPPGKRMGHAGAIIAGGKGSAEDKLEALQSAGVTITRSPADIGKTMLDLLNG</sequence>
<reference key="1">
    <citation type="journal article" date="2006" name="PLoS Genet.">
        <title>Genome sequence of Rickettsia bellii illuminates the role of amoebae in gene exchanges between intracellular pathogens.</title>
        <authorList>
            <person name="Ogata H."/>
            <person name="La Scola B."/>
            <person name="Audic S."/>
            <person name="Renesto P."/>
            <person name="Blanc G."/>
            <person name="Robert C."/>
            <person name="Fournier P.-E."/>
            <person name="Claverie J.-M."/>
            <person name="Raoult D."/>
        </authorList>
    </citation>
    <scope>NUCLEOTIDE SEQUENCE [LARGE SCALE GENOMIC DNA]</scope>
    <source>
        <strain>RML369-C</strain>
    </source>
</reference>
<accession>Q1RH56</accession>